<gene>
    <name evidence="1" type="primary">purR</name>
    <name type="ordered locus">SeD_A1913</name>
</gene>
<protein>
    <recommendedName>
        <fullName evidence="1">HTH-type transcriptional repressor PurR</fullName>
    </recommendedName>
    <alternativeName>
        <fullName evidence="1">Pur regulon repressor</fullName>
    </alternativeName>
    <alternativeName>
        <fullName evidence="1">Purine nucleotide synthesis repressor</fullName>
    </alternativeName>
</protein>
<organism>
    <name type="scientific">Salmonella dublin (strain CT_02021853)</name>
    <dbReference type="NCBI Taxonomy" id="439851"/>
    <lineage>
        <taxon>Bacteria</taxon>
        <taxon>Pseudomonadati</taxon>
        <taxon>Pseudomonadota</taxon>
        <taxon>Gammaproteobacteria</taxon>
        <taxon>Enterobacterales</taxon>
        <taxon>Enterobacteriaceae</taxon>
        <taxon>Salmonella</taxon>
    </lineage>
</organism>
<sequence length="341" mass="38048">MATIKDVAKRANVSTTTVSHVINKTRFVAEETRNAVWAAIKELHYSPSAVARSLKVNHTKSIGLLATSSEAAYFAEIIEAVEKNCFQKGYTLILGNAWNNLEKQRAYLSMMAQKRVDGLLVMCSEYPEPLLSMLEEYRHIPMVVMDWGEAKADFTDTVIDNAFAGGYMAGRYLVERGHRDIGVIPGPLERNTGAGRLAGFMKAMEEALINVPDNWIVQGDFEPESGYHAMQQILSQSHRPTAVFCGGDIMAMGALCAADEMGLRVPQDVSVIGYDNVRNARYFTPALTTIHQPKDSLGETAFNMLLDRIVNKREESQSIEVHPRLVERRSVADGPFRDYRR</sequence>
<proteinExistence type="inferred from homology"/>
<evidence type="ECO:0000255" key="1">
    <source>
        <dbReference type="HAMAP-Rule" id="MF_01277"/>
    </source>
</evidence>
<accession>B5FIH3</accession>
<name>PURR_SALDC</name>
<keyword id="KW-0238">DNA-binding</keyword>
<keyword id="KW-0658">Purine biosynthesis</keyword>
<keyword id="KW-0678">Repressor</keyword>
<keyword id="KW-0804">Transcription</keyword>
<keyword id="KW-0805">Transcription regulation</keyword>
<feature type="chain" id="PRO_1000140298" description="HTH-type transcriptional repressor PurR">
    <location>
        <begin position="1"/>
        <end position="341"/>
    </location>
</feature>
<feature type="domain" description="HTH lacI-type" evidence="1">
    <location>
        <begin position="2"/>
        <end position="56"/>
    </location>
</feature>
<feature type="DNA-binding region" description="H-T-H motif" evidence="1">
    <location>
        <begin position="4"/>
        <end position="23"/>
    </location>
</feature>
<feature type="DNA-binding region" evidence="1">
    <location>
        <begin position="48"/>
        <end position="56"/>
    </location>
</feature>
<feature type="binding site" evidence="1">
    <location>
        <position position="73"/>
    </location>
    <ligand>
        <name>hypoxanthine</name>
        <dbReference type="ChEBI" id="CHEBI:17368"/>
    </ligand>
</feature>
<feature type="binding site" evidence="1">
    <location>
        <position position="190"/>
    </location>
    <ligand>
        <name>hypoxanthine</name>
        <dbReference type="ChEBI" id="CHEBI:17368"/>
    </ligand>
</feature>
<feature type="binding site" evidence="1">
    <location>
        <position position="192"/>
    </location>
    <ligand>
        <name>hypoxanthine</name>
        <dbReference type="ChEBI" id="CHEBI:17368"/>
    </ligand>
</feature>
<feature type="binding site" evidence="1">
    <location>
        <position position="221"/>
    </location>
    <ligand>
        <name>hypoxanthine</name>
        <dbReference type="ChEBI" id="CHEBI:17368"/>
    </ligand>
</feature>
<feature type="binding site" evidence="1">
    <location>
        <position position="275"/>
    </location>
    <ligand>
        <name>hypoxanthine</name>
        <dbReference type="ChEBI" id="CHEBI:17368"/>
    </ligand>
</feature>
<reference key="1">
    <citation type="journal article" date="2011" name="J. Bacteriol.">
        <title>Comparative genomics of 28 Salmonella enterica isolates: evidence for CRISPR-mediated adaptive sublineage evolution.</title>
        <authorList>
            <person name="Fricke W.F."/>
            <person name="Mammel M.K."/>
            <person name="McDermott P.F."/>
            <person name="Tartera C."/>
            <person name="White D.G."/>
            <person name="Leclerc J.E."/>
            <person name="Ravel J."/>
            <person name="Cebula T.A."/>
        </authorList>
    </citation>
    <scope>NUCLEOTIDE SEQUENCE [LARGE SCALE GENOMIC DNA]</scope>
    <source>
        <strain>CT_02021853</strain>
    </source>
</reference>
<comment type="function">
    <text evidence="1">Is the main repressor of the genes involved in the de novo synthesis of purine nucleotides, regulating purB, purC, purEK, purF, purHD, purL, purMN and guaBA expression. PurR is allosterically activated to bind its cognate DNA by binding the purine corepressors, hypoxanthine or guanine, thereby effecting transcription repression.</text>
</comment>
<comment type="pathway">
    <text>Purine metabolism; purine nucleotide biosynthesis [regulation].</text>
</comment>
<comment type="subunit">
    <text evidence="1">Homodimer.</text>
</comment>
<comment type="domain">
    <text evidence="1">Consists of two structural and functional domains: an N-terminal DNA-binding domain, approximately the first 60 residues, and a larger C-terminal domain, approximately 280 residues, which imparts the function of corepressor binding and oligomerization.</text>
</comment>
<dbReference type="EMBL" id="CP001144">
    <property type="protein sequence ID" value="ACH76233.1"/>
    <property type="molecule type" value="Genomic_DNA"/>
</dbReference>
<dbReference type="RefSeq" id="WP_000190993.1">
    <property type="nucleotide sequence ID" value="NC_011205.1"/>
</dbReference>
<dbReference type="SMR" id="B5FIH3"/>
<dbReference type="KEGG" id="sed:SeD_A1913"/>
<dbReference type="HOGENOM" id="CLU_037628_6_2_6"/>
<dbReference type="UniPathway" id="UPA00488"/>
<dbReference type="Proteomes" id="UP000008322">
    <property type="component" value="Chromosome"/>
</dbReference>
<dbReference type="GO" id="GO:0003700">
    <property type="term" value="F:DNA-binding transcription factor activity"/>
    <property type="evidence" value="ECO:0007669"/>
    <property type="project" value="TreeGrafter"/>
</dbReference>
<dbReference type="GO" id="GO:0000976">
    <property type="term" value="F:transcription cis-regulatory region binding"/>
    <property type="evidence" value="ECO:0007669"/>
    <property type="project" value="TreeGrafter"/>
</dbReference>
<dbReference type="GO" id="GO:0045892">
    <property type="term" value="P:negative regulation of DNA-templated transcription"/>
    <property type="evidence" value="ECO:0007669"/>
    <property type="project" value="UniProtKB-UniRule"/>
</dbReference>
<dbReference type="GO" id="GO:0006164">
    <property type="term" value="P:purine nucleotide biosynthetic process"/>
    <property type="evidence" value="ECO:0007669"/>
    <property type="project" value="UniProtKB-UniPathway"/>
</dbReference>
<dbReference type="CDD" id="cd01392">
    <property type="entry name" value="HTH_LacI"/>
    <property type="match status" value="1"/>
</dbReference>
<dbReference type="CDD" id="cd06275">
    <property type="entry name" value="PBP1_PurR"/>
    <property type="match status" value="1"/>
</dbReference>
<dbReference type="FunFam" id="1.10.260.40:FF:000002">
    <property type="entry name" value="HTH-type transcriptional repressor PurR"/>
    <property type="match status" value="1"/>
</dbReference>
<dbReference type="FunFam" id="3.40.50.2300:FF:000045">
    <property type="entry name" value="HTH-type transcriptional repressor PurR"/>
    <property type="match status" value="1"/>
</dbReference>
<dbReference type="Gene3D" id="3.40.50.2300">
    <property type="match status" value="2"/>
</dbReference>
<dbReference type="Gene3D" id="1.10.260.40">
    <property type="entry name" value="lambda repressor-like DNA-binding domains"/>
    <property type="match status" value="1"/>
</dbReference>
<dbReference type="HAMAP" id="MF_01277">
    <property type="entry name" value="HTH_type_PurR"/>
    <property type="match status" value="1"/>
</dbReference>
<dbReference type="InterPro" id="IPR000843">
    <property type="entry name" value="HTH_LacI"/>
</dbReference>
<dbReference type="InterPro" id="IPR046335">
    <property type="entry name" value="LacI/GalR-like_sensor"/>
</dbReference>
<dbReference type="InterPro" id="IPR010982">
    <property type="entry name" value="Lambda_DNA-bd_dom_sf"/>
</dbReference>
<dbReference type="InterPro" id="IPR028082">
    <property type="entry name" value="Peripla_BP_I"/>
</dbReference>
<dbReference type="InterPro" id="IPR023588">
    <property type="entry name" value="Tscrpt_reg_HTH_PurR"/>
</dbReference>
<dbReference type="NCBIfam" id="NF007979">
    <property type="entry name" value="PRK10703.1"/>
    <property type="match status" value="1"/>
</dbReference>
<dbReference type="PANTHER" id="PTHR30146:SF148">
    <property type="entry name" value="HTH-TYPE TRANSCRIPTIONAL REPRESSOR PURR-RELATED"/>
    <property type="match status" value="1"/>
</dbReference>
<dbReference type="PANTHER" id="PTHR30146">
    <property type="entry name" value="LACI-RELATED TRANSCRIPTIONAL REPRESSOR"/>
    <property type="match status" value="1"/>
</dbReference>
<dbReference type="Pfam" id="PF00356">
    <property type="entry name" value="LacI"/>
    <property type="match status" value="1"/>
</dbReference>
<dbReference type="Pfam" id="PF13377">
    <property type="entry name" value="Peripla_BP_3"/>
    <property type="match status" value="1"/>
</dbReference>
<dbReference type="PRINTS" id="PR00036">
    <property type="entry name" value="HTHLACI"/>
</dbReference>
<dbReference type="SMART" id="SM00354">
    <property type="entry name" value="HTH_LACI"/>
    <property type="match status" value="1"/>
</dbReference>
<dbReference type="SUPFAM" id="SSF47413">
    <property type="entry name" value="lambda repressor-like DNA-binding domains"/>
    <property type="match status" value="1"/>
</dbReference>
<dbReference type="SUPFAM" id="SSF53822">
    <property type="entry name" value="Periplasmic binding protein-like I"/>
    <property type="match status" value="1"/>
</dbReference>
<dbReference type="PROSITE" id="PS00356">
    <property type="entry name" value="HTH_LACI_1"/>
    <property type="match status" value="1"/>
</dbReference>
<dbReference type="PROSITE" id="PS50932">
    <property type="entry name" value="HTH_LACI_2"/>
    <property type="match status" value="1"/>
</dbReference>